<accession>Q8XD89</accession>
<accession>Q7A9S8</accession>
<dbReference type="EC" id="6.5.1.2" evidence="1"/>
<dbReference type="EMBL" id="AE005174">
    <property type="protein sequence ID" value="AAG58791.1"/>
    <property type="status" value="ALT_INIT"/>
    <property type="molecule type" value="Genomic_DNA"/>
</dbReference>
<dbReference type="EMBL" id="BA000007">
    <property type="protein sequence ID" value="BAB37945.2"/>
    <property type="molecule type" value="Genomic_DNA"/>
</dbReference>
<dbReference type="PIR" id="B91194">
    <property type="entry name" value="B91194"/>
</dbReference>
<dbReference type="PIR" id="C86041">
    <property type="entry name" value="C86041"/>
</dbReference>
<dbReference type="RefSeq" id="NP_312549.2">
    <property type="nucleotide sequence ID" value="NC_002695.1"/>
</dbReference>
<dbReference type="RefSeq" id="WP_001303719.1">
    <property type="nucleotide sequence ID" value="NZ_VOAI01000021.1"/>
</dbReference>
<dbReference type="SMR" id="Q8XD89"/>
<dbReference type="STRING" id="155864.Z5073"/>
<dbReference type="GeneID" id="915522"/>
<dbReference type="KEGG" id="ece:Z5073"/>
<dbReference type="KEGG" id="ecs:ECs_4522"/>
<dbReference type="PATRIC" id="fig|386585.9.peg.4739"/>
<dbReference type="eggNOG" id="COG0272">
    <property type="taxonomic scope" value="Bacteria"/>
</dbReference>
<dbReference type="HOGENOM" id="CLU_489786_0_0_6"/>
<dbReference type="OMA" id="DLWIQPK"/>
<dbReference type="Proteomes" id="UP000000558">
    <property type="component" value="Chromosome"/>
</dbReference>
<dbReference type="Proteomes" id="UP000002519">
    <property type="component" value="Chromosome"/>
</dbReference>
<dbReference type="GO" id="GO:0003911">
    <property type="term" value="F:DNA ligase (NAD+) activity"/>
    <property type="evidence" value="ECO:0007669"/>
    <property type="project" value="UniProtKB-UniRule"/>
</dbReference>
<dbReference type="GO" id="GO:0006281">
    <property type="term" value="P:DNA repair"/>
    <property type="evidence" value="ECO:0007669"/>
    <property type="project" value="UniProtKB-KW"/>
</dbReference>
<dbReference type="GO" id="GO:0006260">
    <property type="term" value="P:DNA replication"/>
    <property type="evidence" value="ECO:0007669"/>
    <property type="project" value="UniProtKB-KW"/>
</dbReference>
<dbReference type="FunFam" id="1.10.287.610:FF:000003">
    <property type="entry name" value="DNA ligase B"/>
    <property type="match status" value="1"/>
</dbReference>
<dbReference type="FunFam" id="2.40.50.140:FF:000139">
    <property type="entry name" value="DNA ligase B"/>
    <property type="match status" value="1"/>
</dbReference>
<dbReference type="FunFam" id="3.30.470.30:FF:000007">
    <property type="entry name" value="DNA ligase B"/>
    <property type="match status" value="1"/>
</dbReference>
<dbReference type="Gene3D" id="3.30.470.30">
    <property type="entry name" value="DNA ligase/mRNA capping enzyme"/>
    <property type="match status" value="1"/>
</dbReference>
<dbReference type="Gene3D" id="1.10.287.610">
    <property type="entry name" value="Helix hairpin bin"/>
    <property type="match status" value="1"/>
</dbReference>
<dbReference type="Gene3D" id="2.40.50.140">
    <property type="entry name" value="Nucleic acid-binding proteins"/>
    <property type="match status" value="1"/>
</dbReference>
<dbReference type="HAMAP" id="MF_01587">
    <property type="entry name" value="DNA_ligase_B"/>
    <property type="match status" value="1"/>
</dbReference>
<dbReference type="InterPro" id="IPR018239">
    <property type="entry name" value="DNA_ligase_AS"/>
</dbReference>
<dbReference type="InterPro" id="IPR020923">
    <property type="entry name" value="DNA_ligase_B"/>
</dbReference>
<dbReference type="InterPro" id="IPR033136">
    <property type="entry name" value="DNA_ligase_CS"/>
</dbReference>
<dbReference type="InterPro" id="IPR013839">
    <property type="entry name" value="DNAligase_adenylation"/>
</dbReference>
<dbReference type="InterPro" id="IPR013840">
    <property type="entry name" value="DNAligase_N"/>
</dbReference>
<dbReference type="InterPro" id="IPR012340">
    <property type="entry name" value="NA-bd_OB-fold"/>
</dbReference>
<dbReference type="InterPro" id="IPR050326">
    <property type="entry name" value="NAD_dep_DNA_ligaseB"/>
</dbReference>
<dbReference type="InterPro" id="IPR004150">
    <property type="entry name" value="NAD_DNA_ligase_OB"/>
</dbReference>
<dbReference type="InterPro" id="IPR010994">
    <property type="entry name" value="RuvA_2-like"/>
</dbReference>
<dbReference type="NCBIfam" id="NF005987">
    <property type="entry name" value="PRK08097.1"/>
    <property type="match status" value="1"/>
</dbReference>
<dbReference type="PANTHER" id="PTHR47810">
    <property type="entry name" value="DNA LIGASE"/>
    <property type="match status" value="1"/>
</dbReference>
<dbReference type="PANTHER" id="PTHR47810:SF1">
    <property type="entry name" value="DNA LIGASE B"/>
    <property type="match status" value="1"/>
</dbReference>
<dbReference type="Pfam" id="PF01653">
    <property type="entry name" value="DNA_ligase_aden"/>
    <property type="match status" value="1"/>
</dbReference>
<dbReference type="Pfam" id="PF03120">
    <property type="entry name" value="DNA_ligase_OB"/>
    <property type="match status" value="1"/>
</dbReference>
<dbReference type="SMART" id="SM00532">
    <property type="entry name" value="LIGANc"/>
    <property type="match status" value="1"/>
</dbReference>
<dbReference type="SUPFAM" id="SSF56091">
    <property type="entry name" value="DNA ligase/mRNA capping enzyme, catalytic domain"/>
    <property type="match status" value="1"/>
</dbReference>
<dbReference type="SUPFAM" id="SSF50249">
    <property type="entry name" value="Nucleic acid-binding proteins"/>
    <property type="match status" value="1"/>
</dbReference>
<dbReference type="SUPFAM" id="SSF47781">
    <property type="entry name" value="RuvA domain 2-like"/>
    <property type="match status" value="1"/>
</dbReference>
<dbReference type="PROSITE" id="PS01055">
    <property type="entry name" value="DNA_LIGASE_N1"/>
    <property type="match status" value="1"/>
</dbReference>
<dbReference type="PROSITE" id="PS01056">
    <property type="entry name" value="DNA_LIGASE_N2"/>
    <property type="match status" value="1"/>
</dbReference>
<evidence type="ECO:0000255" key="1">
    <source>
        <dbReference type="HAMAP-Rule" id="MF_01587"/>
    </source>
</evidence>
<evidence type="ECO:0000305" key="2"/>
<reference key="1">
    <citation type="journal article" date="2001" name="Nature">
        <title>Genome sequence of enterohaemorrhagic Escherichia coli O157:H7.</title>
        <authorList>
            <person name="Perna N.T."/>
            <person name="Plunkett G. III"/>
            <person name="Burland V."/>
            <person name="Mau B."/>
            <person name="Glasner J.D."/>
            <person name="Rose D.J."/>
            <person name="Mayhew G.F."/>
            <person name="Evans P.S."/>
            <person name="Gregor J."/>
            <person name="Kirkpatrick H.A."/>
            <person name="Posfai G."/>
            <person name="Hackett J."/>
            <person name="Klink S."/>
            <person name="Boutin A."/>
            <person name="Shao Y."/>
            <person name="Miller L."/>
            <person name="Grotbeck E.J."/>
            <person name="Davis N.W."/>
            <person name="Lim A."/>
            <person name="Dimalanta E.T."/>
            <person name="Potamousis K."/>
            <person name="Apodaca J."/>
            <person name="Anantharaman T.S."/>
            <person name="Lin J."/>
            <person name="Yen G."/>
            <person name="Schwartz D.C."/>
            <person name="Welch R.A."/>
            <person name="Blattner F.R."/>
        </authorList>
    </citation>
    <scope>NUCLEOTIDE SEQUENCE [LARGE SCALE GENOMIC DNA]</scope>
    <source>
        <strain>O157:H7 / EDL933 / ATCC 700927 / EHEC</strain>
    </source>
</reference>
<reference key="2">
    <citation type="journal article" date="2001" name="DNA Res.">
        <title>Complete genome sequence of enterohemorrhagic Escherichia coli O157:H7 and genomic comparison with a laboratory strain K-12.</title>
        <authorList>
            <person name="Hayashi T."/>
            <person name="Makino K."/>
            <person name="Ohnishi M."/>
            <person name="Kurokawa K."/>
            <person name="Ishii K."/>
            <person name="Yokoyama K."/>
            <person name="Han C.-G."/>
            <person name="Ohtsubo E."/>
            <person name="Nakayama K."/>
            <person name="Murata T."/>
            <person name="Tanaka M."/>
            <person name="Tobe T."/>
            <person name="Iida T."/>
            <person name="Takami H."/>
            <person name="Honda T."/>
            <person name="Sasakawa C."/>
            <person name="Ogasawara N."/>
            <person name="Yasunaga T."/>
            <person name="Kuhara S."/>
            <person name="Shiba T."/>
            <person name="Hattori M."/>
            <person name="Shinagawa H."/>
        </authorList>
    </citation>
    <scope>NUCLEOTIDE SEQUENCE [LARGE SCALE GENOMIC DNA]</scope>
    <source>
        <strain>O157:H7 / Sakai / RIMD 0509952 / EHEC</strain>
    </source>
</reference>
<sequence length="560" mass="63381">MKVWMAILISILCWQSSVWAVCPAWSPARAQEEIFRLQQQIKQWDDDYWKEGKSEVEDGVYDQLSARLTQWQRCFVSEPRDVMMPPLNGAVMHPVAHTGVRKMADKNALSLWMRERSDLWVQPKVDGVAVTLVYRDGKLNKAISRGNGLKGEDWTQKVSLISAVPQTVSGPLANSTLQGEIFLQREGHIQQQMGGINARAKVAGLMMRQDDSDTLNSLGVFVWAWPDGPQLMTDRLKELATAGFTLTQRYTRAVKNADEVARVRNEWWKAKLPFVTDGVVVRGAKEPESRHWLPGQAEWLVAWKYQPVAQVAKVKAIQFAVGKSGKISVVASLAPVMLDDKKVQRVNIGSVRRWQEWDIAPGDQILVSLAGQGIPRIDDVVWRGAERTKPTPPENRFNSLTCYFASDVCQEQFISRLVWLGSKQVLGLDGIGEAGWRALHQTHRFEHIFSWLLLTPEQLQNTPGIAKSKSAQLWHRFNLARKQPFTRWVMAMGIPLTRAALNASDERSWSQLLFSTEQFWQQLPGTGSGRARQVIEWKENAQIKKLGSWLAAQQITGFEP</sequence>
<gene>
    <name evidence="1" type="primary">ligB</name>
    <name type="ordered locus">Z5073</name>
    <name type="ordered locus">ECs4522</name>
</gene>
<proteinExistence type="inferred from homology"/>
<name>LIGB_ECO57</name>
<keyword id="KW-0227">DNA damage</keyword>
<keyword id="KW-0234">DNA repair</keyword>
<keyword id="KW-0235">DNA replication</keyword>
<keyword id="KW-0436">Ligase</keyword>
<keyword id="KW-0520">NAD</keyword>
<keyword id="KW-1185">Reference proteome</keyword>
<organism>
    <name type="scientific">Escherichia coli O157:H7</name>
    <dbReference type="NCBI Taxonomy" id="83334"/>
    <lineage>
        <taxon>Bacteria</taxon>
        <taxon>Pseudomonadati</taxon>
        <taxon>Pseudomonadota</taxon>
        <taxon>Gammaproteobacteria</taxon>
        <taxon>Enterobacterales</taxon>
        <taxon>Enterobacteriaceae</taxon>
        <taxon>Escherichia</taxon>
    </lineage>
</organism>
<protein>
    <recommendedName>
        <fullName evidence="1">DNA ligase B</fullName>
        <ecNumber evidence="1">6.5.1.2</ecNumber>
    </recommendedName>
    <alternativeName>
        <fullName evidence="1">Polydeoxyribonucleotide synthase [NAD(+)] B</fullName>
    </alternativeName>
</protein>
<feature type="chain" id="PRO_0000313538" description="DNA ligase B">
    <location>
        <begin position="1"/>
        <end position="560"/>
    </location>
</feature>
<feature type="active site" description="N6-AMP-lysine intermediate" evidence="1">
    <location>
        <position position="124"/>
    </location>
</feature>
<comment type="function">
    <text evidence="1">Catalyzes the formation of phosphodiester linkages between 5'-phosphoryl and 3'-hydroxyl groups in double-stranded DNA using NAD as a coenzyme and as the energy source for the reaction.</text>
</comment>
<comment type="catalytic activity">
    <reaction evidence="1">
        <text>NAD(+) + (deoxyribonucleotide)n-3'-hydroxyl + 5'-phospho-(deoxyribonucleotide)m = (deoxyribonucleotide)n+m + AMP + beta-nicotinamide D-nucleotide.</text>
        <dbReference type="EC" id="6.5.1.2"/>
    </reaction>
</comment>
<comment type="similarity">
    <text evidence="1">Belongs to the NAD-dependent DNA ligase family. LigB subfamily.</text>
</comment>
<comment type="sequence caution" evidence="2">
    <conflict type="erroneous initiation">
        <sequence resource="EMBL-CDS" id="AAG58791"/>
    </conflict>
    <text>Extended N-terminus.</text>
</comment>